<gene>
    <name evidence="1 2" type="primary">psbA4</name>
    <name type="ordered locus">glr2656</name>
</gene>
<reference key="1">
    <citation type="journal article" date="2003" name="DNA Res.">
        <title>Complete genome structure of Gloeobacter violaceus PCC 7421, a cyanobacterium that lacks thylakoids.</title>
        <authorList>
            <person name="Nakamura Y."/>
            <person name="Kaneko T."/>
            <person name="Sato S."/>
            <person name="Mimuro M."/>
            <person name="Miyashita H."/>
            <person name="Tsuchiya T."/>
            <person name="Sasamoto S."/>
            <person name="Watanabe A."/>
            <person name="Kawashima K."/>
            <person name="Kishida Y."/>
            <person name="Kiyokawa C."/>
            <person name="Kohara M."/>
            <person name="Matsumoto M."/>
            <person name="Matsuno A."/>
            <person name="Nakazaki N."/>
            <person name="Shimpo S."/>
            <person name="Takeuchi C."/>
            <person name="Yamada M."/>
            <person name="Tabata S."/>
        </authorList>
    </citation>
    <scope>NUCLEOTIDE SEQUENCE [LARGE SCALE GENOMIC DNA]</scope>
    <source>
        <strain>ATCC 29082 / PCC 7421</strain>
    </source>
</reference>
<proteinExistence type="inferred from homology"/>
<keyword id="KW-0106">Calcium</keyword>
<keyword id="KW-0997">Cell inner membrane</keyword>
<keyword id="KW-1003">Cell membrane</keyword>
<keyword id="KW-0148">Chlorophyll</keyword>
<keyword id="KW-0157">Chromophore</keyword>
<keyword id="KW-0249">Electron transport</keyword>
<keyword id="KW-0359">Herbicide resistance</keyword>
<keyword id="KW-0408">Iron</keyword>
<keyword id="KW-0460">Magnesium</keyword>
<keyword id="KW-0464">Manganese</keyword>
<keyword id="KW-0472">Membrane</keyword>
<keyword id="KW-0479">Metal-binding</keyword>
<keyword id="KW-0560">Oxidoreductase</keyword>
<keyword id="KW-0602">Photosynthesis</keyword>
<keyword id="KW-0604">Photosystem II</keyword>
<keyword id="KW-1185">Reference proteome</keyword>
<keyword id="KW-0812">Transmembrane</keyword>
<keyword id="KW-1133">Transmembrane helix</keyword>
<keyword id="KW-0813">Transport</keyword>
<sequence length="362" mass="39799">MTATLERRQAQGLWDRFADWVTSTHNRFYVGWFGVLMIPTLLSATICFVIAFVAAPPVDMDGIREPISGSLLYGNNIITGAVIPSSNAIGLHFYPIWEAASMDEWLYNGGPYQLVVFHFLIGVFCYLGREWELSYRLGLRPWICIAYSAPVAAATAVFLVYPIGQGSFSDGMPLGISGTFNFMFVFQAEHNILNHPFHMLGVAGVFGGALISAMHGSLVTSSLVSETSYEESQNYGYKFGQAEETYNISAAHGYISRLVFQYFAFWGANSRSLHFIMAAFPVIGIWFTSLGISVMAFNLNGFNFNSSIVDSQGRAIYTWADIVNRANLGMEVMHERNAHNFPLDLAGTESAPVAVSTAKVGG</sequence>
<accession>Q7NH81</accession>
<protein>
    <recommendedName>
        <fullName evidence="1">Photosystem II protein D1 3</fullName>
        <shortName evidence="1">PSII D1 protein 3</shortName>
        <ecNumber evidence="1">1.10.3.9</ecNumber>
    </recommendedName>
    <alternativeName>
        <fullName evidence="1">Photosystem II Q(B) protein 3</fullName>
    </alternativeName>
</protein>
<feature type="chain" id="PRO_0000316349" description="Photosystem II protein D1 3">
    <location>
        <begin position="1"/>
        <end position="346"/>
    </location>
</feature>
<feature type="propeptide" id="PRO_0000316350" evidence="1">
    <location>
        <begin position="347"/>
        <end position="362"/>
    </location>
</feature>
<feature type="transmembrane region" description="Helical" evidence="1">
    <location>
        <begin position="29"/>
        <end position="46"/>
    </location>
</feature>
<feature type="transmembrane region" description="Helical" evidence="1">
    <location>
        <begin position="118"/>
        <end position="133"/>
    </location>
</feature>
<feature type="transmembrane region" description="Helical" evidence="1">
    <location>
        <begin position="142"/>
        <end position="156"/>
    </location>
</feature>
<feature type="transmembrane region" description="Helical" evidence="1">
    <location>
        <begin position="197"/>
        <end position="218"/>
    </location>
</feature>
<feature type="transmembrane region" description="Helical" evidence="1">
    <location>
        <begin position="276"/>
        <end position="290"/>
    </location>
</feature>
<feature type="binding site" description="axial binding residue" evidence="1">
    <location>
        <position position="118"/>
    </location>
    <ligand>
        <name>chlorophyll a</name>
        <dbReference type="ChEBI" id="CHEBI:58416"/>
        <label>ChlzD1</label>
    </ligand>
    <ligandPart>
        <name>Mg</name>
        <dbReference type="ChEBI" id="CHEBI:25107"/>
    </ligandPart>
</feature>
<feature type="binding site" evidence="1">
    <location>
        <position position="126"/>
    </location>
    <ligand>
        <name>pheophytin a</name>
        <dbReference type="ChEBI" id="CHEBI:136840"/>
        <label>D1</label>
    </ligand>
</feature>
<feature type="binding site" evidence="1">
    <location>
        <position position="170"/>
    </location>
    <ligand>
        <name>[CaMn4O5] cluster</name>
        <dbReference type="ChEBI" id="CHEBI:189552"/>
    </ligand>
</feature>
<feature type="binding site" evidence="1">
    <location>
        <position position="189"/>
    </location>
    <ligand>
        <name>[CaMn4O5] cluster</name>
        <dbReference type="ChEBI" id="CHEBI:189552"/>
    </ligand>
</feature>
<feature type="binding site" description="axial binding residue" evidence="1">
    <location>
        <position position="198"/>
    </location>
    <ligand>
        <name>chlorophyll a</name>
        <dbReference type="ChEBI" id="CHEBI:58416"/>
        <label>PD1</label>
    </ligand>
    <ligandPart>
        <name>Mg</name>
        <dbReference type="ChEBI" id="CHEBI:25107"/>
    </ligandPart>
</feature>
<feature type="binding site" evidence="1">
    <location>
        <position position="215"/>
    </location>
    <ligand>
        <name>a quinone</name>
        <dbReference type="ChEBI" id="CHEBI:132124"/>
        <label>B</label>
    </ligand>
</feature>
<feature type="binding site" evidence="1">
    <location>
        <position position="215"/>
    </location>
    <ligand>
        <name>Fe cation</name>
        <dbReference type="ChEBI" id="CHEBI:24875"/>
        <note>ligand shared with heterodimeric partner</note>
    </ligand>
</feature>
<feature type="binding site" evidence="1">
    <location>
        <begin position="264"/>
        <end position="265"/>
    </location>
    <ligand>
        <name>a quinone</name>
        <dbReference type="ChEBI" id="CHEBI:132124"/>
        <label>B</label>
    </ligand>
</feature>
<feature type="binding site" evidence="1">
    <location>
        <position position="274"/>
    </location>
    <ligand>
        <name>Fe cation</name>
        <dbReference type="ChEBI" id="CHEBI:24875"/>
        <note>ligand shared with heterodimeric partner</note>
    </ligand>
</feature>
<feature type="binding site" evidence="1">
    <location>
        <position position="334"/>
    </location>
    <ligand>
        <name>[CaMn4O5] cluster</name>
        <dbReference type="ChEBI" id="CHEBI:189552"/>
    </ligand>
</feature>
<feature type="binding site" evidence="1">
    <location>
        <position position="335"/>
    </location>
    <ligand>
        <name>[CaMn4O5] cluster</name>
        <dbReference type="ChEBI" id="CHEBI:189552"/>
    </ligand>
</feature>
<feature type="binding site" evidence="1">
    <location>
        <position position="344"/>
    </location>
    <ligand>
        <name>[CaMn4O5] cluster</name>
        <dbReference type="ChEBI" id="CHEBI:189552"/>
    </ligand>
</feature>
<feature type="binding site" evidence="1">
    <location>
        <position position="346"/>
    </location>
    <ligand>
        <name>[CaMn4O5] cluster</name>
        <dbReference type="ChEBI" id="CHEBI:189552"/>
    </ligand>
</feature>
<feature type="site" description="Tyrosine radical intermediate" evidence="1">
    <location>
        <position position="161"/>
    </location>
</feature>
<feature type="site" description="Stabilizes free radical intermediate" evidence="1">
    <location>
        <position position="190"/>
    </location>
</feature>
<feature type="site" description="Cleavage; by CtpA" evidence="1">
    <location>
        <begin position="346"/>
        <end position="347"/>
    </location>
</feature>
<name>PSBA3_GLOVI</name>
<dbReference type="EC" id="1.10.3.9" evidence="1"/>
<dbReference type="EMBL" id="BA000045">
    <property type="protein sequence ID" value="BAC90597.1"/>
    <property type="molecule type" value="Genomic_DNA"/>
</dbReference>
<dbReference type="RefSeq" id="NP_925602.1">
    <property type="nucleotide sequence ID" value="NC_005125.1"/>
</dbReference>
<dbReference type="RefSeq" id="WP_011142650.1">
    <property type="nucleotide sequence ID" value="NC_005125.1"/>
</dbReference>
<dbReference type="SMR" id="Q7NH81"/>
<dbReference type="STRING" id="251221.gene:10760157"/>
<dbReference type="EnsemblBacteria" id="BAC90597">
    <property type="protein sequence ID" value="BAC90597"/>
    <property type="gene ID" value="BAC90597"/>
</dbReference>
<dbReference type="KEGG" id="gvi:glr2656"/>
<dbReference type="PATRIC" id="fig|251221.4.peg.2691"/>
<dbReference type="eggNOG" id="ENOG502Z87P">
    <property type="taxonomic scope" value="Bacteria"/>
</dbReference>
<dbReference type="HOGENOM" id="CLU_054206_1_0_3"/>
<dbReference type="InParanoid" id="Q7NH81"/>
<dbReference type="OrthoDB" id="505356at2"/>
<dbReference type="PhylomeDB" id="Q7NH81"/>
<dbReference type="Proteomes" id="UP000000557">
    <property type="component" value="Chromosome"/>
</dbReference>
<dbReference type="GO" id="GO:0009523">
    <property type="term" value="C:photosystem II"/>
    <property type="evidence" value="ECO:0000318"/>
    <property type="project" value="GO_Central"/>
</dbReference>
<dbReference type="GO" id="GO:0005886">
    <property type="term" value="C:plasma membrane"/>
    <property type="evidence" value="ECO:0007669"/>
    <property type="project" value="UniProtKB-SubCell"/>
</dbReference>
<dbReference type="GO" id="GO:0016168">
    <property type="term" value="F:chlorophyll binding"/>
    <property type="evidence" value="ECO:0007669"/>
    <property type="project" value="UniProtKB-UniRule"/>
</dbReference>
<dbReference type="GO" id="GO:0045156">
    <property type="term" value="F:electron transporter, transferring electrons within the cyclic electron transport pathway of photosynthesis activity"/>
    <property type="evidence" value="ECO:0007669"/>
    <property type="project" value="InterPro"/>
</dbReference>
<dbReference type="GO" id="GO:0005506">
    <property type="term" value="F:iron ion binding"/>
    <property type="evidence" value="ECO:0007669"/>
    <property type="project" value="UniProtKB-UniRule"/>
</dbReference>
<dbReference type="GO" id="GO:0016682">
    <property type="term" value="F:oxidoreductase activity, acting on diphenols and related substances as donors, oxygen as acceptor"/>
    <property type="evidence" value="ECO:0007669"/>
    <property type="project" value="UniProtKB-UniRule"/>
</dbReference>
<dbReference type="GO" id="GO:0010242">
    <property type="term" value="F:oxygen evolving activity"/>
    <property type="evidence" value="ECO:0007669"/>
    <property type="project" value="UniProtKB-EC"/>
</dbReference>
<dbReference type="GO" id="GO:0009772">
    <property type="term" value="P:photosynthetic electron transport in photosystem II"/>
    <property type="evidence" value="ECO:0007669"/>
    <property type="project" value="InterPro"/>
</dbReference>
<dbReference type="GO" id="GO:0009635">
    <property type="term" value="P:response to herbicide"/>
    <property type="evidence" value="ECO:0007669"/>
    <property type="project" value="UniProtKB-KW"/>
</dbReference>
<dbReference type="FunFam" id="1.20.85.10:FF:000002">
    <property type="entry name" value="Photosystem II protein D1"/>
    <property type="match status" value="1"/>
</dbReference>
<dbReference type="Gene3D" id="1.20.85.10">
    <property type="entry name" value="Photosystem II protein D1-like"/>
    <property type="match status" value="2"/>
</dbReference>
<dbReference type="HAMAP" id="MF_01379">
    <property type="entry name" value="PSII_PsbA_D1"/>
    <property type="match status" value="1"/>
</dbReference>
<dbReference type="InterPro" id="IPR055266">
    <property type="entry name" value="D1/D2"/>
</dbReference>
<dbReference type="InterPro" id="IPR036854">
    <property type="entry name" value="Photo_II_D1/D2_sf"/>
</dbReference>
<dbReference type="InterPro" id="IPR000484">
    <property type="entry name" value="Photo_RC_L/M"/>
</dbReference>
<dbReference type="InterPro" id="IPR055265">
    <property type="entry name" value="Photo_RC_L/M_CS"/>
</dbReference>
<dbReference type="InterPro" id="IPR005867">
    <property type="entry name" value="PSII_D1"/>
</dbReference>
<dbReference type="NCBIfam" id="TIGR01151">
    <property type="entry name" value="psbA"/>
    <property type="match status" value="1"/>
</dbReference>
<dbReference type="PANTHER" id="PTHR33149:SF12">
    <property type="entry name" value="PHOTOSYSTEM II D2 PROTEIN"/>
    <property type="match status" value="1"/>
</dbReference>
<dbReference type="PANTHER" id="PTHR33149">
    <property type="entry name" value="PHOTOSYSTEM II PROTEIN D1"/>
    <property type="match status" value="1"/>
</dbReference>
<dbReference type="Pfam" id="PF00124">
    <property type="entry name" value="Photo_RC"/>
    <property type="match status" value="1"/>
</dbReference>
<dbReference type="PRINTS" id="PR00256">
    <property type="entry name" value="REACTNCENTRE"/>
</dbReference>
<dbReference type="SUPFAM" id="SSF81483">
    <property type="entry name" value="Bacterial photosystem II reaction centre, L and M subunits"/>
    <property type="match status" value="1"/>
</dbReference>
<dbReference type="PROSITE" id="PS00244">
    <property type="entry name" value="REACTION_CENTER"/>
    <property type="match status" value="1"/>
</dbReference>
<comment type="function">
    <text evidence="1">Photosystem II (PSII) is a light-driven water:plastoquinone oxidoreductase that uses light energy to abstract electrons from H(2)O, generating O(2) and a proton gradient subsequently used for ATP formation. It consists of a core antenna complex that captures photons, and an electron transfer chain that converts photonic excitation into a charge separation. The D1/D2 (PsbA/PsbD) reaction center heterodimer binds P680, the primary electron donor of PSII as well as several subsequent electron acceptors.</text>
</comment>
<comment type="catalytic activity">
    <reaction evidence="1">
        <text>2 a plastoquinone + 4 hnu + 2 H2O = 2 a plastoquinol + O2</text>
        <dbReference type="Rhea" id="RHEA:36359"/>
        <dbReference type="Rhea" id="RHEA-COMP:9561"/>
        <dbReference type="Rhea" id="RHEA-COMP:9562"/>
        <dbReference type="ChEBI" id="CHEBI:15377"/>
        <dbReference type="ChEBI" id="CHEBI:15379"/>
        <dbReference type="ChEBI" id="CHEBI:17757"/>
        <dbReference type="ChEBI" id="CHEBI:30212"/>
        <dbReference type="ChEBI" id="CHEBI:62192"/>
        <dbReference type="EC" id="1.10.3.9"/>
    </reaction>
</comment>
<comment type="cofactor">
    <text evidence="1">The D1/D2 heterodimer binds P680, chlorophylls that are the primary electron donor of PSII, and subsequent electron acceptors. It shares a non-heme iron and each subunit binds pheophytin, quinone, additional chlorophylls, carotenoids and lipids. D1 provides most of the ligands for the Mn4-Ca-O5 cluster of the oxygen-evolving complex (OEC). There is also a Cl(-1) ion associated with D1 and D2, which is required for oxygen evolution. The PSII complex binds additional chlorophylls, carotenoids and specific lipids.</text>
</comment>
<comment type="subunit">
    <text evidence="3">PSII is composed of 1 copy each of membrane proteins PsbA, PsbB, PsbC, PsbD, PsbE, PsbF, PsbH, PsbI, PsbJ, PsbK, PsbL, PsbM, PsbT, PsbX, Psb30/Ycf12, peripheral proteins PsbO, CyanoQ (PsbQ), PsbU, PsbV and a large number of cofactors. It forms dimeric complexes.</text>
</comment>
<comment type="subcellular location">
    <subcellularLocation>
        <location evidence="1">Cell inner membrane</location>
        <topology evidence="1">Multi-pass membrane protein</topology>
    </subcellularLocation>
</comment>
<comment type="PTM">
    <text evidence="1">Tyr-161 forms a radical intermediate that is referred to as redox-active TyrZ, YZ or Y-Z.</text>
</comment>
<comment type="PTM">
    <text evidence="1">C-terminally processed by CtpA; processing is essential to allow assembly of the oxygen-evolving complex and thus photosynthetic growth.</text>
</comment>
<comment type="miscellaneous">
    <text evidence="1">Cyanobacteria usually contain more than 2 copies of the psbA gene.</text>
</comment>
<comment type="miscellaneous">
    <text evidence="1">2 of the reaction center chlorophylls (ChlD1 and ChlD2) are entirely coordinated by water.</text>
</comment>
<comment type="miscellaneous">
    <text evidence="1">Herbicides such as atrazine, BNT, diuron or ioxynil bind in the Q(B) binding site and block subsequent electron transfer.</text>
</comment>
<comment type="similarity">
    <text evidence="1">Belongs to the reaction center PufL/M/PsbA/D family.</text>
</comment>
<evidence type="ECO:0000255" key="1">
    <source>
        <dbReference type="HAMAP-Rule" id="MF_01379"/>
    </source>
</evidence>
<evidence type="ECO:0000305" key="2"/>
<evidence type="ECO:0000305" key="3">
    <source>
    </source>
</evidence>
<organism>
    <name type="scientific">Gloeobacter violaceus (strain ATCC 29082 / PCC 7421)</name>
    <dbReference type="NCBI Taxonomy" id="251221"/>
    <lineage>
        <taxon>Bacteria</taxon>
        <taxon>Bacillati</taxon>
        <taxon>Cyanobacteriota</taxon>
        <taxon>Cyanophyceae</taxon>
        <taxon>Gloeobacterales</taxon>
        <taxon>Gloeobacteraceae</taxon>
        <taxon>Gloeobacter</taxon>
    </lineage>
</organism>